<comment type="function">
    <text evidence="1">Single strand-specific metallo-endoribonuclease involved in late-stage 70S ribosome quality control and in maturation of the 3' terminus of the 16S rRNA.</text>
</comment>
<comment type="cofactor">
    <cofactor evidence="1">
        <name>Zn(2+)</name>
        <dbReference type="ChEBI" id="CHEBI:29105"/>
    </cofactor>
    <text evidence="1">Binds 1 zinc ion.</text>
</comment>
<comment type="subcellular location">
    <subcellularLocation>
        <location evidence="1">Cytoplasm</location>
    </subcellularLocation>
</comment>
<comment type="similarity">
    <text evidence="1">Belongs to the endoribonuclease YbeY family.</text>
</comment>
<accession>B3GXC9</accession>
<reference key="1">
    <citation type="submission" date="2008-06" db="EMBL/GenBank/DDBJ databases">
        <title>Genome and proteome analysis of A. pleuropneumoniae serotype 7.</title>
        <authorList>
            <person name="Linke B."/>
            <person name="Buettner F."/>
            <person name="Martinez-Arias R."/>
            <person name="Goesmann A."/>
            <person name="Baltes N."/>
            <person name="Tegetmeyer H."/>
            <person name="Singh M."/>
            <person name="Gerlach G.F."/>
        </authorList>
    </citation>
    <scope>NUCLEOTIDE SEQUENCE [LARGE SCALE GENOMIC DNA]</scope>
    <source>
        <strain>AP76</strain>
    </source>
</reference>
<sequence>MTTPIIDLQIAAENSENLPSLAQFTQWVQRALAHEAQTEDFPETEITIRIVDEAESYELNLTYRGKDKPTNVLSFPFEVPEGIELPLLGDLIICRQVVEKEAQEQQISLESHWAHLAIHGTLHLLGYDHIEDAEAEEMEGLETEIMQSLGFEDPYISEKVIEE</sequence>
<name>YBEY_ACTP7</name>
<dbReference type="EC" id="3.1.-.-" evidence="1"/>
<dbReference type="EMBL" id="CP001091">
    <property type="protein sequence ID" value="ACE61388.1"/>
    <property type="molecule type" value="Genomic_DNA"/>
</dbReference>
<dbReference type="RefSeq" id="WP_005617189.1">
    <property type="nucleotide sequence ID" value="NC_010939.1"/>
</dbReference>
<dbReference type="SMR" id="B3GXC9"/>
<dbReference type="KEGG" id="apa:APP7_0736"/>
<dbReference type="HOGENOM" id="CLU_106710_0_1_6"/>
<dbReference type="Proteomes" id="UP000001226">
    <property type="component" value="Chromosome"/>
</dbReference>
<dbReference type="GO" id="GO:0005737">
    <property type="term" value="C:cytoplasm"/>
    <property type="evidence" value="ECO:0007669"/>
    <property type="project" value="UniProtKB-SubCell"/>
</dbReference>
<dbReference type="GO" id="GO:0004222">
    <property type="term" value="F:metalloendopeptidase activity"/>
    <property type="evidence" value="ECO:0007669"/>
    <property type="project" value="InterPro"/>
</dbReference>
<dbReference type="GO" id="GO:0004521">
    <property type="term" value="F:RNA endonuclease activity"/>
    <property type="evidence" value="ECO:0007669"/>
    <property type="project" value="UniProtKB-UniRule"/>
</dbReference>
<dbReference type="GO" id="GO:0008270">
    <property type="term" value="F:zinc ion binding"/>
    <property type="evidence" value="ECO:0007669"/>
    <property type="project" value="UniProtKB-UniRule"/>
</dbReference>
<dbReference type="GO" id="GO:0006364">
    <property type="term" value="P:rRNA processing"/>
    <property type="evidence" value="ECO:0007669"/>
    <property type="project" value="UniProtKB-UniRule"/>
</dbReference>
<dbReference type="Gene3D" id="3.40.390.30">
    <property type="entry name" value="Metalloproteases ('zincins'), catalytic domain"/>
    <property type="match status" value="1"/>
</dbReference>
<dbReference type="HAMAP" id="MF_00009">
    <property type="entry name" value="Endoribonucl_YbeY"/>
    <property type="match status" value="1"/>
</dbReference>
<dbReference type="InterPro" id="IPR023091">
    <property type="entry name" value="MetalPrtase_cat_dom_sf_prd"/>
</dbReference>
<dbReference type="InterPro" id="IPR002036">
    <property type="entry name" value="YbeY"/>
</dbReference>
<dbReference type="InterPro" id="IPR020549">
    <property type="entry name" value="YbeY_CS"/>
</dbReference>
<dbReference type="NCBIfam" id="TIGR00043">
    <property type="entry name" value="rRNA maturation RNase YbeY"/>
    <property type="match status" value="1"/>
</dbReference>
<dbReference type="PANTHER" id="PTHR46986">
    <property type="entry name" value="ENDORIBONUCLEASE YBEY, CHLOROPLASTIC"/>
    <property type="match status" value="1"/>
</dbReference>
<dbReference type="PANTHER" id="PTHR46986:SF1">
    <property type="entry name" value="ENDORIBONUCLEASE YBEY, CHLOROPLASTIC"/>
    <property type="match status" value="1"/>
</dbReference>
<dbReference type="Pfam" id="PF02130">
    <property type="entry name" value="YbeY"/>
    <property type="match status" value="1"/>
</dbReference>
<dbReference type="SUPFAM" id="SSF55486">
    <property type="entry name" value="Metalloproteases ('zincins'), catalytic domain"/>
    <property type="match status" value="1"/>
</dbReference>
<dbReference type="PROSITE" id="PS01306">
    <property type="entry name" value="UPF0054"/>
    <property type="match status" value="1"/>
</dbReference>
<keyword id="KW-0963">Cytoplasm</keyword>
<keyword id="KW-0255">Endonuclease</keyword>
<keyword id="KW-0378">Hydrolase</keyword>
<keyword id="KW-0479">Metal-binding</keyword>
<keyword id="KW-0540">Nuclease</keyword>
<keyword id="KW-0690">Ribosome biogenesis</keyword>
<keyword id="KW-0698">rRNA processing</keyword>
<keyword id="KW-0862">Zinc</keyword>
<protein>
    <recommendedName>
        <fullName evidence="1">Endoribonuclease YbeY</fullName>
        <ecNumber evidence="1">3.1.-.-</ecNumber>
    </recommendedName>
</protein>
<gene>
    <name evidence="1" type="primary">ybeY</name>
    <name type="ordered locus">APP7_0736</name>
</gene>
<proteinExistence type="inferred from homology"/>
<evidence type="ECO:0000255" key="1">
    <source>
        <dbReference type="HAMAP-Rule" id="MF_00009"/>
    </source>
</evidence>
<feature type="chain" id="PRO_1000089145" description="Endoribonuclease YbeY">
    <location>
        <begin position="1"/>
        <end position="163"/>
    </location>
</feature>
<feature type="binding site" evidence="1">
    <location>
        <position position="119"/>
    </location>
    <ligand>
        <name>Zn(2+)</name>
        <dbReference type="ChEBI" id="CHEBI:29105"/>
        <note>catalytic</note>
    </ligand>
</feature>
<feature type="binding site" evidence="1">
    <location>
        <position position="123"/>
    </location>
    <ligand>
        <name>Zn(2+)</name>
        <dbReference type="ChEBI" id="CHEBI:29105"/>
        <note>catalytic</note>
    </ligand>
</feature>
<feature type="binding site" evidence="1">
    <location>
        <position position="129"/>
    </location>
    <ligand>
        <name>Zn(2+)</name>
        <dbReference type="ChEBI" id="CHEBI:29105"/>
        <note>catalytic</note>
    </ligand>
</feature>
<organism>
    <name type="scientific">Actinobacillus pleuropneumoniae serotype 7 (strain AP76)</name>
    <dbReference type="NCBI Taxonomy" id="537457"/>
    <lineage>
        <taxon>Bacteria</taxon>
        <taxon>Pseudomonadati</taxon>
        <taxon>Pseudomonadota</taxon>
        <taxon>Gammaproteobacteria</taxon>
        <taxon>Pasteurellales</taxon>
        <taxon>Pasteurellaceae</taxon>
        <taxon>Actinobacillus</taxon>
    </lineage>
</organism>